<name>RLMI_ECOLC</name>
<dbReference type="EC" id="2.1.1.191" evidence="1"/>
<dbReference type="EMBL" id="CP000946">
    <property type="protein sequence ID" value="ACA78259.1"/>
    <property type="molecule type" value="Genomic_DNA"/>
</dbReference>
<dbReference type="RefSeq" id="WP_000116297.1">
    <property type="nucleotide sequence ID" value="NZ_MTFT01000009.1"/>
</dbReference>
<dbReference type="SMR" id="B1IVW5"/>
<dbReference type="KEGG" id="ecl:EcolC_2629"/>
<dbReference type="HOGENOM" id="CLU_014042_0_0_6"/>
<dbReference type="GO" id="GO:0005737">
    <property type="term" value="C:cytoplasm"/>
    <property type="evidence" value="ECO:0007669"/>
    <property type="project" value="UniProtKB-SubCell"/>
</dbReference>
<dbReference type="GO" id="GO:0003723">
    <property type="term" value="F:RNA binding"/>
    <property type="evidence" value="ECO:0007669"/>
    <property type="project" value="UniProtKB-KW"/>
</dbReference>
<dbReference type="GO" id="GO:0016434">
    <property type="term" value="F:rRNA (cytosine) methyltransferase activity"/>
    <property type="evidence" value="ECO:0007669"/>
    <property type="project" value="UniProtKB-UniRule"/>
</dbReference>
<dbReference type="CDD" id="cd02440">
    <property type="entry name" value="AdoMet_MTases"/>
    <property type="match status" value="1"/>
</dbReference>
<dbReference type="CDD" id="cd21153">
    <property type="entry name" value="PUA_RlmI"/>
    <property type="match status" value="1"/>
</dbReference>
<dbReference type="CDD" id="cd11572">
    <property type="entry name" value="RlmI_M_like"/>
    <property type="match status" value="1"/>
</dbReference>
<dbReference type="FunFam" id="2.30.130.10:FF:000005">
    <property type="entry name" value="Ribosomal RNA large subunit methyltransferase I"/>
    <property type="match status" value="1"/>
</dbReference>
<dbReference type="FunFam" id="3.30.750.80:FF:000002">
    <property type="entry name" value="Ribosomal RNA large subunit methyltransferase I"/>
    <property type="match status" value="1"/>
</dbReference>
<dbReference type="FunFam" id="3.40.50.150:FF:000044">
    <property type="entry name" value="Ribosomal RNA large subunit methyltransferase I"/>
    <property type="match status" value="1"/>
</dbReference>
<dbReference type="Gene3D" id="2.30.130.10">
    <property type="entry name" value="PUA domain"/>
    <property type="match status" value="1"/>
</dbReference>
<dbReference type="Gene3D" id="3.30.750.80">
    <property type="entry name" value="RNA methyltransferase domain (HRMD) like"/>
    <property type="match status" value="1"/>
</dbReference>
<dbReference type="Gene3D" id="3.40.50.150">
    <property type="entry name" value="Vaccinia Virus protein VP39"/>
    <property type="match status" value="1"/>
</dbReference>
<dbReference type="HAMAP" id="MF_01857">
    <property type="entry name" value="23SrRNA_methyltr_I"/>
    <property type="match status" value="1"/>
</dbReference>
<dbReference type="InterPro" id="IPR002478">
    <property type="entry name" value="PUA"/>
</dbReference>
<dbReference type="InterPro" id="IPR015947">
    <property type="entry name" value="PUA-like_sf"/>
</dbReference>
<dbReference type="InterPro" id="IPR036974">
    <property type="entry name" value="PUA_sf"/>
</dbReference>
<dbReference type="InterPro" id="IPR023542">
    <property type="entry name" value="RLMI"/>
</dbReference>
<dbReference type="InterPro" id="IPR041532">
    <property type="entry name" value="RlmI-like_PUA"/>
</dbReference>
<dbReference type="InterPro" id="IPR019614">
    <property type="entry name" value="SAM-dep_methyl-trfase"/>
</dbReference>
<dbReference type="InterPro" id="IPR029063">
    <property type="entry name" value="SAM-dependent_MTases_sf"/>
</dbReference>
<dbReference type="NCBIfam" id="NF011707">
    <property type="entry name" value="PRK15128.1"/>
    <property type="match status" value="1"/>
</dbReference>
<dbReference type="PANTHER" id="PTHR42873">
    <property type="entry name" value="RIBOSOMAL RNA LARGE SUBUNIT METHYLTRANSFERASE"/>
    <property type="match status" value="1"/>
</dbReference>
<dbReference type="PANTHER" id="PTHR42873:SF1">
    <property type="entry name" value="S-ADENOSYLMETHIONINE-DEPENDENT METHYLTRANSFERASE DOMAIN-CONTAINING PROTEIN"/>
    <property type="match status" value="1"/>
</dbReference>
<dbReference type="Pfam" id="PF10672">
    <property type="entry name" value="Methyltrans_SAM"/>
    <property type="match status" value="1"/>
</dbReference>
<dbReference type="Pfam" id="PF17785">
    <property type="entry name" value="PUA_3"/>
    <property type="match status" value="1"/>
</dbReference>
<dbReference type="SMART" id="SM00359">
    <property type="entry name" value="PUA"/>
    <property type="match status" value="1"/>
</dbReference>
<dbReference type="SUPFAM" id="SSF88697">
    <property type="entry name" value="PUA domain-like"/>
    <property type="match status" value="1"/>
</dbReference>
<dbReference type="SUPFAM" id="SSF53335">
    <property type="entry name" value="S-adenosyl-L-methionine-dependent methyltransferases"/>
    <property type="match status" value="1"/>
</dbReference>
<dbReference type="PROSITE" id="PS50890">
    <property type="entry name" value="PUA"/>
    <property type="match status" value="1"/>
</dbReference>
<evidence type="ECO:0000255" key="1">
    <source>
        <dbReference type="HAMAP-Rule" id="MF_01857"/>
    </source>
</evidence>
<accession>B1IVW5</accession>
<protein>
    <recommendedName>
        <fullName evidence="1">Ribosomal RNA large subunit methyltransferase I</fullName>
        <ecNumber evidence="1">2.1.1.191</ecNumber>
    </recommendedName>
    <alternativeName>
        <fullName evidence="1">23S rRNA m5C1962 methyltransferase</fullName>
    </alternativeName>
    <alternativeName>
        <fullName evidence="1">rRNA (cytosine-C(5)-)-methyltransferase RlmI</fullName>
    </alternativeName>
</protein>
<gene>
    <name evidence="1" type="primary">rlmI</name>
    <name type="ordered locus">EcolC_2629</name>
</gene>
<proteinExistence type="inferred from homology"/>
<feature type="chain" id="PRO_0000366223" description="Ribosomal RNA large subunit methyltransferase I">
    <location>
        <begin position="1"/>
        <end position="396"/>
    </location>
</feature>
<feature type="domain" description="PUA" evidence="1">
    <location>
        <begin position="2"/>
        <end position="81"/>
    </location>
</feature>
<keyword id="KW-0963">Cytoplasm</keyword>
<keyword id="KW-0489">Methyltransferase</keyword>
<keyword id="KW-0694">RNA-binding</keyword>
<keyword id="KW-0698">rRNA processing</keyword>
<keyword id="KW-0949">S-adenosyl-L-methionine</keyword>
<keyword id="KW-0808">Transferase</keyword>
<comment type="function">
    <text evidence="1">Specifically methylates the cytosine at position 1962 (m5C1962) of 23S rRNA.</text>
</comment>
<comment type="catalytic activity">
    <reaction evidence="1">
        <text>cytidine(1962) in 23S rRNA + S-adenosyl-L-methionine = 5-methylcytidine(1962) in 23S rRNA + S-adenosyl-L-homocysteine + H(+)</text>
        <dbReference type="Rhea" id="RHEA:42912"/>
        <dbReference type="Rhea" id="RHEA-COMP:10382"/>
        <dbReference type="Rhea" id="RHEA-COMP:10386"/>
        <dbReference type="ChEBI" id="CHEBI:15378"/>
        <dbReference type="ChEBI" id="CHEBI:57856"/>
        <dbReference type="ChEBI" id="CHEBI:59789"/>
        <dbReference type="ChEBI" id="CHEBI:74483"/>
        <dbReference type="ChEBI" id="CHEBI:82748"/>
        <dbReference type="EC" id="2.1.1.191"/>
    </reaction>
</comment>
<comment type="subcellular location">
    <subcellularLocation>
        <location evidence="1">Cytoplasm</location>
    </subcellularLocation>
</comment>
<comment type="similarity">
    <text evidence="1">Belongs to the methyltransferase superfamily. RlmI family.</text>
</comment>
<sequence>MSVRLVLAKGREKSLLRRHPWVFSGAVARMEGKASLGETIDIVDHQGKWLARGAYSPASQIRARVWTFDPSESIDIAFFSRRLQQAQKWRDWLAQKDGLDSYRLIAGESDGLPGITIDRFGNFLVLQLLSAGAEYQRAALISALQTLYPECSIYDRSDVAVRKKEGMELTQGPVTGELPPALLPIEEHGMKLLVDIQHGHKTGYYLDQRDSRLATRRYVENKRVLNCFSYTGGFAVSALMGGCSQVVSVDTSQEALDIARQNVELNKLDLSKAEFVRDDVFKLLRTYRDRGEKFDVIVMDPPKFVENKSQLMGACRGYKDINMLAIQLLNEGGILLTFSCSGLMTSDLFQKIIADAAIDAGRDVQFIEQFRQAADHPVIATYPEGLYLKGFACRVM</sequence>
<reference key="1">
    <citation type="submission" date="2008-02" db="EMBL/GenBank/DDBJ databases">
        <title>Complete sequence of Escherichia coli C str. ATCC 8739.</title>
        <authorList>
            <person name="Copeland A."/>
            <person name="Lucas S."/>
            <person name="Lapidus A."/>
            <person name="Glavina del Rio T."/>
            <person name="Dalin E."/>
            <person name="Tice H."/>
            <person name="Bruce D."/>
            <person name="Goodwin L."/>
            <person name="Pitluck S."/>
            <person name="Kiss H."/>
            <person name="Brettin T."/>
            <person name="Detter J.C."/>
            <person name="Han C."/>
            <person name="Kuske C.R."/>
            <person name="Schmutz J."/>
            <person name="Larimer F."/>
            <person name="Land M."/>
            <person name="Hauser L."/>
            <person name="Kyrpides N."/>
            <person name="Mikhailova N."/>
            <person name="Ingram L."/>
            <person name="Richardson P."/>
        </authorList>
    </citation>
    <scope>NUCLEOTIDE SEQUENCE [LARGE SCALE GENOMIC DNA]</scope>
    <source>
        <strain>ATCC 8739 / DSM 1576 / NBRC 3972 / NCIMB 8545 / WDCM 00012 / Crooks</strain>
    </source>
</reference>
<organism>
    <name type="scientific">Escherichia coli (strain ATCC 8739 / DSM 1576 / NBRC 3972 / NCIMB 8545 / WDCM 00012 / Crooks)</name>
    <dbReference type="NCBI Taxonomy" id="481805"/>
    <lineage>
        <taxon>Bacteria</taxon>
        <taxon>Pseudomonadati</taxon>
        <taxon>Pseudomonadota</taxon>
        <taxon>Gammaproteobacteria</taxon>
        <taxon>Enterobacterales</taxon>
        <taxon>Enterobacteriaceae</taxon>
        <taxon>Escherichia</taxon>
    </lineage>
</organism>